<gene>
    <name type="ordered locus">CGSHiGG_07585</name>
</gene>
<protein>
    <recommendedName>
        <fullName evidence="1">UPF0149 protein CGSHiGG_07585</fullName>
    </recommendedName>
</protein>
<sequence length="182" mass="20332">MLISHSDLNQQLKSAGIGFNATELHGFLSGLLCGGLKDQSWLPLLYQFSNDNHAYPTGLVQPVTELYEKISQTLSDVEGFTFELGLTEDENVFAQADSLSDWANQFLLGLGLAQPKLAKEKGEIGEAVDDLQDICQLGYDEDDNEEELAEALEEIIEYVRTIAMLFYSHFNEEEIESKPVLH</sequence>
<evidence type="ECO:0000255" key="1">
    <source>
        <dbReference type="HAMAP-Rule" id="MF_00346"/>
    </source>
</evidence>
<dbReference type="EMBL" id="CP000672">
    <property type="protein sequence ID" value="ABR00374.1"/>
    <property type="molecule type" value="Genomic_DNA"/>
</dbReference>
<dbReference type="SMR" id="A5UHW8"/>
<dbReference type="KEGG" id="hiq:CGSHiGG_07585"/>
<dbReference type="HOGENOM" id="CLU_085336_1_0_6"/>
<dbReference type="Proteomes" id="UP000001990">
    <property type="component" value="Chromosome"/>
</dbReference>
<dbReference type="GO" id="GO:0005829">
    <property type="term" value="C:cytosol"/>
    <property type="evidence" value="ECO:0007669"/>
    <property type="project" value="TreeGrafter"/>
</dbReference>
<dbReference type="FunFam" id="1.20.120.740:FF:000001">
    <property type="entry name" value="UPF0149 protein YgfB"/>
    <property type="match status" value="1"/>
</dbReference>
<dbReference type="Gene3D" id="1.20.120.740">
    <property type="entry name" value="YgfB uncharacterised protein family UPF0149, PF03695"/>
    <property type="match status" value="1"/>
</dbReference>
<dbReference type="HAMAP" id="MF_00346">
    <property type="entry name" value="UPF0149"/>
    <property type="match status" value="1"/>
</dbReference>
<dbReference type="InterPro" id="IPR011978">
    <property type="entry name" value="YgfB-like"/>
</dbReference>
<dbReference type="InterPro" id="IPR036255">
    <property type="entry name" value="YgfB-like_sf"/>
</dbReference>
<dbReference type="NCBIfam" id="NF002477">
    <property type="entry name" value="PRK01736.1"/>
    <property type="match status" value="1"/>
</dbReference>
<dbReference type="NCBIfam" id="TIGR02292">
    <property type="entry name" value="ygfB_yecA"/>
    <property type="match status" value="1"/>
</dbReference>
<dbReference type="PANTHER" id="PTHR37528">
    <property type="entry name" value="UPF0149 PROTEIN YGFB"/>
    <property type="match status" value="1"/>
</dbReference>
<dbReference type="PANTHER" id="PTHR37528:SF1">
    <property type="entry name" value="UPF0149 PROTEIN YGFB"/>
    <property type="match status" value="1"/>
</dbReference>
<dbReference type="Pfam" id="PF03695">
    <property type="entry name" value="UPF0149"/>
    <property type="match status" value="1"/>
</dbReference>
<dbReference type="SUPFAM" id="SSF101327">
    <property type="entry name" value="YgfB-like"/>
    <property type="match status" value="1"/>
</dbReference>
<organism>
    <name type="scientific">Haemophilus influenzae (strain PittGG)</name>
    <dbReference type="NCBI Taxonomy" id="374931"/>
    <lineage>
        <taxon>Bacteria</taxon>
        <taxon>Pseudomonadati</taxon>
        <taxon>Pseudomonadota</taxon>
        <taxon>Gammaproteobacteria</taxon>
        <taxon>Pasteurellales</taxon>
        <taxon>Pasteurellaceae</taxon>
        <taxon>Haemophilus</taxon>
    </lineage>
</organism>
<feature type="chain" id="PRO_1000013043" description="UPF0149 protein CGSHiGG_07585">
    <location>
        <begin position="1"/>
        <end position="182"/>
    </location>
</feature>
<proteinExistence type="inferred from homology"/>
<name>Y7585_HAEIG</name>
<comment type="similarity">
    <text evidence="1">Belongs to the UPF0149 family.</text>
</comment>
<accession>A5UHW8</accession>
<reference key="1">
    <citation type="journal article" date="2007" name="Genome Biol.">
        <title>Characterization and modeling of the Haemophilus influenzae core and supragenomes based on the complete genomic sequences of Rd and 12 clinical nontypeable strains.</title>
        <authorList>
            <person name="Hogg J.S."/>
            <person name="Hu F.Z."/>
            <person name="Janto B."/>
            <person name="Boissy R."/>
            <person name="Hayes J."/>
            <person name="Keefe R."/>
            <person name="Post J.C."/>
            <person name="Ehrlich G.D."/>
        </authorList>
    </citation>
    <scope>NUCLEOTIDE SEQUENCE [LARGE SCALE GENOMIC DNA]</scope>
    <source>
        <strain>PittGG</strain>
    </source>
</reference>